<keyword id="KW-0408">Iron</keyword>
<keyword id="KW-0418">Kinase</keyword>
<keyword id="KW-0496">Mitochondrion</keyword>
<keyword id="KW-0547">Nucleotide-binding</keyword>
<keyword id="KW-1185">Reference proteome</keyword>
<keyword id="KW-0808">Transferase</keyword>
<keyword id="KW-0809">Transit peptide</keyword>
<gene>
    <name evidence="6" type="primary">GAK</name>
    <name evidence="10" type="ORF">PF3D7_0415600</name>
</gene>
<name>KAD3_PLAF7</name>
<comment type="function">
    <text evidence="4">Catalyzes the reversible transfer of the terminal phosphate group between GTP and AMP (PubMed:15478799). Has very low activity with UTP, ITP, CTP and IMP and no activity with ATP, GMP, CMP and UMP in vitro (PubMed:15478799).</text>
</comment>
<comment type="catalytic activity">
    <reaction evidence="4">
        <text>a ribonucleoside 5'-triphosphate + AMP = a ribonucleoside 5'-diphosphate + ADP</text>
        <dbReference type="Rhea" id="RHEA:13749"/>
        <dbReference type="ChEBI" id="CHEBI:57930"/>
        <dbReference type="ChEBI" id="CHEBI:61557"/>
        <dbReference type="ChEBI" id="CHEBI:456215"/>
        <dbReference type="ChEBI" id="CHEBI:456216"/>
        <dbReference type="EC" id="2.7.4.10"/>
    </reaction>
</comment>
<comment type="catalytic activity">
    <reaction evidence="4">
        <text>GTP + AMP = GDP + ADP</text>
        <dbReference type="Rhea" id="RHEA:29863"/>
        <dbReference type="ChEBI" id="CHEBI:37565"/>
        <dbReference type="ChEBI" id="CHEBI:58189"/>
        <dbReference type="ChEBI" id="CHEBI:456215"/>
        <dbReference type="ChEBI" id="CHEBI:456216"/>
    </reaction>
</comment>
<comment type="activity regulation">
    <text evidence="4">Inhibited by the dinucleoside pentaphosphate compound P1,P5-di(guanosine-5') pentaphosphate (GP5A).</text>
</comment>
<comment type="biophysicochemical properties">
    <kinetics>
        <KM evidence="4">210 uM for AMP (at 25 degrees Celsius and pH 6)</KM>
        <KM evidence="4">130 uM for GTP (at 25 degrees Celsius and pH 6)</KM>
        <Vmax evidence="4">100.0 umol/min/mg enzyme (at 25 degrees Celsius and pH 6)</Vmax>
        <text evidence="4">kcat is 46 sec(-1) (at 25 degrees Celsius and pH 6).</text>
    </kinetics>
    <phDependence>
        <text evidence="4">Optimum pH is 6.</text>
    </phDependence>
</comment>
<comment type="subcellular location">
    <subcellularLocation>
        <location evidence="5">Mitochondrion</location>
    </subcellularLocation>
</comment>
<comment type="domain">
    <text evidence="4">There is a putative zinc finger domain which may bind to iron.</text>
</comment>
<comment type="similarity">
    <text evidence="3">Belongs to the adenylate kinase family.</text>
</comment>
<evidence type="ECO:0000250" key="1">
    <source>
        <dbReference type="UniProtKB" id="P00568"/>
    </source>
</evidence>
<evidence type="ECO:0000250" key="2">
    <source>
        <dbReference type="UniProtKB" id="Q8IJV6"/>
    </source>
</evidence>
<evidence type="ECO:0000255" key="3">
    <source>
        <dbReference type="RuleBase" id="RU003330"/>
    </source>
</evidence>
<evidence type="ECO:0000269" key="4">
    <source>
    </source>
</evidence>
<evidence type="ECO:0000269" key="5">
    <source>
    </source>
</evidence>
<evidence type="ECO:0000303" key="6">
    <source>
    </source>
</evidence>
<evidence type="ECO:0000305" key="7"/>
<evidence type="ECO:0000305" key="8">
    <source>
    </source>
</evidence>
<evidence type="ECO:0000312" key="9">
    <source>
        <dbReference type="EMBL" id="AAK58841.1"/>
    </source>
</evidence>
<evidence type="ECO:0000312" key="10">
    <source>
        <dbReference type="EMBL" id="CAD49193.1"/>
    </source>
</evidence>
<evidence type="ECO:0000312" key="11">
    <source>
        <dbReference type="Proteomes" id="UP000001450"/>
    </source>
</evidence>
<dbReference type="EC" id="2.7.4.10" evidence="4"/>
<dbReference type="EMBL" id="AF308612">
    <property type="protein sequence ID" value="AAK58841.1"/>
    <property type="molecule type" value="mRNA"/>
</dbReference>
<dbReference type="EMBL" id="AL844503">
    <property type="protein sequence ID" value="CAD49193.1"/>
    <property type="molecule type" value="Genomic_DNA"/>
</dbReference>
<dbReference type="RefSeq" id="XP_001351464.1">
    <property type="nucleotide sequence ID" value="XM_001351428.1"/>
</dbReference>
<dbReference type="SMR" id="Q8I1T1"/>
<dbReference type="FunCoup" id="Q8I1T1">
    <property type="interactions" value="91"/>
</dbReference>
<dbReference type="STRING" id="36329.Q8I1T1"/>
<dbReference type="PaxDb" id="5833-PFD0755c"/>
<dbReference type="EnsemblProtists" id="CAD49193">
    <property type="protein sequence ID" value="CAD49193"/>
    <property type="gene ID" value="PF3D7_0415600"/>
</dbReference>
<dbReference type="GeneID" id="812591"/>
<dbReference type="KEGG" id="pfa:PF3D7_0415600"/>
<dbReference type="VEuPathDB" id="PlasmoDB:PF3D7_0415600"/>
<dbReference type="VEuPathDB" id="PlasmoDB:Pf7G8-2_000108500"/>
<dbReference type="VEuPathDB" id="PlasmoDB:Pf7G8_040020500"/>
<dbReference type="VEuPathDB" id="PlasmoDB:PfCD01_040021100"/>
<dbReference type="VEuPathDB" id="PlasmoDB:PfDd2_040020800"/>
<dbReference type="VEuPathDB" id="PlasmoDB:PfGA01_040020100"/>
<dbReference type="VEuPathDB" id="PlasmoDB:PfGB4_040020900"/>
<dbReference type="VEuPathDB" id="PlasmoDB:PfGN01_040021000"/>
<dbReference type="VEuPathDB" id="PlasmoDB:PfHB3_040019600"/>
<dbReference type="VEuPathDB" id="PlasmoDB:PfIT_040020000"/>
<dbReference type="VEuPathDB" id="PlasmoDB:PfKE01_040022500"/>
<dbReference type="VEuPathDB" id="PlasmoDB:PfKH01_040021000"/>
<dbReference type="VEuPathDB" id="PlasmoDB:PfKH02_040020600"/>
<dbReference type="VEuPathDB" id="PlasmoDB:PfML01_040021700"/>
<dbReference type="VEuPathDB" id="PlasmoDB:PfNF135_040021100"/>
<dbReference type="VEuPathDB" id="PlasmoDB:PfNF166_040021600"/>
<dbReference type="VEuPathDB" id="PlasmoDB:PfNF54_040021300"/>
<dbReference type="VEuPathDB" id="PlasmoDB:PfSD01_070031600"/>
<dbReference type="VEuPathDB" id="PlasmoDB:PfSN01_040020400"/>
<dbReference type="VEuPathDB" id="PlasmoDB:PfTG01_040021000"/>
<dbReference type="HOGENOM" id="CLU_032354_1_2_1"/>
<dbReference type="InParanoid" id="Q8I1T1"/>
<dbReference type="OMA" id="FFKNSNC"/>
<dbReference type="OrthoDB" id="439792at2759"/>
<dbReference type="PhylomeDB" id="Q8I1T1"/>
<dbReference type="BRENDA" id="2.7.4.10">
    <property type="organism ID" value="4889"/>
</dbReference>
<dbReference type="Reactome" id="R-PFA-499943">
    <property type="pathway name" value="Interconversion of nucleotide di- and triphosphates"/>
</dbReference>
<dbReference type="Proteomes" id="UP000001450">
    <property type="component" value="Chromosome 4"/>
</dbReference>
<dbReference type="GO" id="GO:0005737">
    <property type="term" value="C:cytoplasm"/>
    <property type="evidence" value="ECO:0000318"/>
    <property type="project" value="GO_Central"/>
</dbReference>
<dbReference type="GO" id="GO:0005759">
    <property type="term" value="C:mitochondrial matrix"/>
    <property type="evidence" value="ECO:0000304"/>
    <property type="project" value="GeneDB"/>
</dbReference>
<dbReference type="GO" id="GO:0005739">
    <property type="term" value="C:mitochondrion"/>
    <property type="evidence" value="ECO:0000314"/>
    <property type="project" value="CACAO"/>
</dbReference>
<dbReference type="GO" id="GO:0004017">
    <property type="term" value="F:adenylate kinase activity"/>
    <property type="evidence" value="ECO:0000318"/>
    <property type="project" value="GO_Central"/>
</dbReference>
<dbReference type="GO" id="GO:0005524">
    <property type="term" value="F:ATP binding"/>
    <property type="evidence" value="ECO:0007669"/>
    <property type="project" value="InterPro"/>
</dbReference>
<dbReference type="GO" id="GO:0046899">
    <property type="term" value="F:nucleoside triphosphate adenylate kinase activity"/>
    <property type="evidence" value="ECO:0000314"/>
    <property type="project" value="GeneDB"/>
</dbReference>
<dbReference type="GO" id="GO:0006139">
    <property type="term" value="P:nucleobase-containing compound metabolic process"/>
    <property type="evidence" value="ECO:0000314"/>
    <property type="project" value="GeneDB"/>
</dbReference>
<dbReference type="CDD" id="cd01428">
    <property type="entry name" value="ADK"/>
    <property type="match status" value="1"/>
</dbReference>
<dbReference type="FunFam" id="3.40.50.300:FF:001877">
    <property type="entry name" value="GTP:AMP phosphotransferase"/>
    <property type="match status" value="1"/>
</dbReference>
<dbReference type="Gene3D" id="3.40.50.300">
    <property type="entry name" value="P-loop containing nucleotide triphosphate hydrolases"/>
    <property type="match status" value="1"/>
</dbReference>
<dbReference type="HAMAP" id="MF_00235">
    <property type="entry name" value="Adenylate_kinase_Adk"/>
    <property type="match status" value="1"/>
</dbReference>
<dbReference type="InterPro" id="IPR006259">
    <property type="entry name" value="Adenyl_kin_sub"/>
</dbReference>
<dbReference type="InterPro" id="IPR000850">
    <property type="entry name" value="Adenylat/UMP-CMP_kin"/>
</dbReference>
<dbReference type="InterPro" id="IPR033690">
    <property type="entry name" value="Adenylat_kinase_CS"/>
</dbReference>
<dbReference type="InterPro" id="IPR027417">
    <property type="entry name" value="P-loop_NTPase"/>
</dbReference>
<dbReference type="NCBIfam" id="TIGR01351">
    <property type="entry name" value="adk"/>
    <property type="match status" value="1"/>
</dbReference>
<dbReference type="PANTHER" id="PTHR23359">
    <property type="entry name" value="NUCLEOTIDE KINASE"/>
    <property type="match status" value="1"/>
</dbReference>
<dbReference type="Pfam" id="PF00406">
    <property type="entry name" value="ADK"/>
    <property type="match status" value="1"/>
</dbReference>
<dbReference type="PRINTS" id="PR00094">
    <property type="entry name" value="ADENYLTKNASE"/>
</dbReference>
<dbReference type="SUPFAM" id="SSF52540">
    <property type="entry name" value="P-loop containing nucleoside triphosphate hydrolases"/>
    <property type="match status" value="1"/>
</dbReference>
<dbReference type="PROSITE" id="PS00113">
    <property type="entry name" value="ADENYLATE_KINASE"/>
    <property type="match status" value="1"/>
</dbReference>
<reference evidence="9" key="1">
    <citation type="journal article" date="2004" name="Mol. Biochem. Parasitol.">
        <title>Adenylate kinase and GTP:AMP phosphotransferase of the malarial parasite Plasmodium falciparum. Central players in cellular energy metabolism.</title>
        <authorList>
            <person name="Ulschmid J.K."/>
            <person name="Rahlfs S."/>
            <person name="Schirmer R.H."/>
            <person name="Becker K."/>
        </authorList>
    </citation>
    <scope>NUCLEOTIDE SEQUENCE [MRNA]</scope>
    <scope>FUNCTION</scope>
    <scope>CATALYTIC ACTIVITY</scope>
    <scope>ACTIVITY REGULATION</scope>
    <scope>BIOPHYSICOCHEMICAL PROPERTIES</scope>
    <scope>DOMAIN</scope>
    <source>
        <strain evidence="9">3D7</strain>
    </source>
</reference>
<reference evidence="11" key="2">
    <citation type="journal article" date="2002" name="Nature">
        <title>Genome sequence of the human malaria parasite Plasmodium falciparum.</title>
        <authorList>
            <person name="Gardner M.J."/>
            <person name="Hall N."/>
            <person name="Fung E."/>
            <person name="White O."/>
            <person name="Berriman M."/>
            <person name="Hyman R.W."/>
            <person name="Carlton J.M."/>
            <person name="Pain A."/>
            <person name="Nelson K.E."/>
            <person name="Bowman S."/>
            <person name="Paulsen I.T."/>
            <person name="James K.D."/>
            <person name="Eisen J.A."/>
            <person name="Rutherford K.M."/>
            <person name="Salzberg S.L."/>
            <person name="Craig A."/>
            <person name="Kyes S."/>
            <person name="Chan M.-S."/>
            <person name="Nene V."/>
            <person name="Shallom S.J."/>
            <person name="Suh B."/>
            <person name="Peterson J."/>
            <person name="Angiuoli S."/>
            <person name="Pertea M."/>
            <person name="Allen J."/>
            <person name="Selengut J."/>
            <person name="Haft D."/>
            <person name="Mather M.W."/>
            <person name="Vaidya A.B."/>
            <person name="Martin D.M.A."/>
            <person name="Fairlamb A.H."/>
            <person name="Fraunholz M.J."/>
            <person name="Roos D.S."/>
            <person name="Ralph S.A."/>
            <person name="McFadden G.I."/>
            <person name="Cummings L.M."/>
            <person name="Subramanian G.M."/>
            <person name="Mungall C."/>
            <person name="Venter J.C."/>
            <person name="Carucci D.J."/>
            <person name="Hoffman S.L."/>
            <person name="Newbold C."/>
            <person name="Davis R.W."/>
            <person name="Fraser C.M."/>
            <person name="Barrell B.G."/>
        </authorList>
    </citation>
    <scope>NUCLEOTIDE SEQUENCE [LARGE SCALE GENOMIC DNA]</scope>
    <source>
        <strain evidence="11">3D7</strain>
    </source>
</reference>
<reference evidence="11" key="3">
    <citation type="journal article" date="2002" name="Nature">
        <title>Sequence of Plasmodium falciparum chromosomes 1, 3-9 and 13.</title>
        <authorList>
            <person name="Hall N."/>
            <person name="Pain A."/>
            <person name="Berriman M."/>
            <person name="Churcher C.M."/>
            <person name="Harris B."/>
            <person name="Harris D."/>
            <person name="Mungall K.L."/>
            <person name="Bowman S."/>
            <person name="Atkin R."/>
            <person name="Baker S."/>
            <person name="Barron A."/>
            <person name="Brooks K."/>
            <person name="Buckee C.O."/>
            <person name="Burrows C."/>
            <person name="Cherevach I."/>
            <person name="Chillingworth C."/>
            <person name="Chillingworth T."/>
            <person name="Christodoulou Z."/>
            <person name="Clark L."/>
            <person name="Clark R."/>
            <person name="Corton C."/>
            <person name="Cronin A."/>
            <person name="Davies R.M."/>
            <person name="Davis P."/>
            <person name="Dear P."/>
            <person name="Dearden F."/>
            <person name="Doggett J."/>
            <person name="Feltwell T."/>
            <person name="Goble A."/>
            <person name="Goodhead I."/>
            <person name="Gwilliam R."/>
            <person name="Hamlin N."/>
            <person name="Hance Z."/>
            <person name="Harper D."/>
            <person name="Hauser H."/>
            <person name="Hornsby T."/>
            <person name="Holroyd S."/>
            <person name="Horrocks P."/>
            <person name="Humphray S."/>
            <person name="Jagels K."/>
            <person name="James K.D."/>
            <person name="Johnson D."/>
            <person name="Kerhornou A."/>
            <person name="Knights A."/>
            <person name="Konfortov B."/>
            <person name="Kyes S."/>
            <person name="Larke N."/>
            <person name="Lawson D."/>
            <person name="Lennard N."/>
            <person name="Line A."/>
            <person name="Maddison M."/>
            <person name="Mclean J."/>
            <person name="Mooney P."/>
            <person name="Moule S."/>
            <person name="Murphy L."/>
            <person name="Oliver K."/>
            <person name="Ormond D."/>
            <person name="Price C."/>
            <person name="Quail M.A."/>
            <person name="Rabbinowitsch E."/>
            <person name="Rajandream M.A."/>
            <person name="Rutter S."/>
            <person name="Rutherford K.M."/>
            <person name="Sanders M."/>
            <person name="Simmonds M."/>
            <person name="Seeger K."/>
            <person name="Sharp S."/>
            <person name="Smith R."/>
            <person name="Squares R."/>
            <person name="Squares S."/>
            <person name="Stevens K."/>
            <person name="Taylor K."/>
            <person name="Tivey A."/>
            <person name="Unwin L."/>
            <person name="Whitehead S."/>
            <person name="Woodward J.R."/>
            <person name="Sulston J.E."/>
            <person name="Craig A."/>
            <person name="Newbold C."/>
            <person name="Barrell B.G."/>
        </authorList>
    </citation>
    <scope>NUCLEOTIDE SEQUENCE [LARGE SCALE GENOMIC DNA]</scope>
    <source>
        <strain evidence="11">3D7</strain>
    </source>
</reference>
<reference evidence="7" key="4">
    <citation type="journal article" date="2012" name="FEBS Lett.">
        <title>Subcellular localization of adenylate kinases in Plasmodium falciparum.</title>
        <authorList>
            <person name="Ma J."/>
            <person name="Rahlfs S."/>
            <person name="Jortzik E."/>
            <person name="Schirmer R.H."/>
            <person name="Przyborski J.M."/>
            <person name="Becker K."/>
        </authorList>
    </citation>
    <scope>SUBCELLULAR LOCATION</scope>
</reference>
<proteinExistence type="evidence at protein level"/>
<sequence length="229" mass="26738">MRIVLFGAPGVGKGTFAEILSKKENLKHINVGNILRNEIKKESNIGKEVQNVVRSGNLVSDSLIINIVHDEMKNILNKKYKGFILDGFPRNMYQSKELIKMTNIDLFVNIYLPRNILIKKLLGRRICNICDKNFNVSNIQQDSFDMPPILPSKDCIQCNGHTNLIKRKDDNEDIINHRLNSYESDYIPIIQFFKNEKYNLIDFPLRRGIRDFDDFYSILVNYRKNEKLK</sequence>
<protein>
    <recommendedName>
        <fullName evidence="6">GTP:AMP phosphotransferase</fullName>
        <shortName evidence="6">PfGAK</shortName>
        <ecNumber evidence="4">2.7.4.10</ecNumber>
    </recommendedName>
</protein>
<accession>Q8I1T1</accession>
<accession>Q964H2</accession>
<organism evidence="11">
    <name type="scientific">Plasmodium falciparum (isolate 3D7)</name>
    <dbReference type="NCBI Taxonomy" id="36329"/>
    <lineage>
        <taxon>Eukaryota</taxon>
        <taxon>Sar</taxon>
        <taxon>Alveolata</taxon>
        <taxon>Apicomplexa</taxon>
        <taxon>Aconoidasida</taxon>
        <taxon>Haemosporida</taxon>
        <taxon>Plasmodiidae</taxon>
        <taxon>Plasmodium</taxon>
        <taxon>Plasmodium (Laverania)</taxon>
    </lineage>
</organism>
<feature type="transit peptide" description="Mitochondrion" evidence="8">
    <location>
        <begin position="1"/>
        <end status="unknown"/>
    </location>
</feature>
<feature type="chain" id="PRO_0000455421" description="GTP:AMP phosphotransferase">
    <location>
        <begin status="unknown"/>
        <end position="229"/>
    </location>
</feature>
<feature type="region of interest" description="NMP" evidence="2">
    <location>
        <begin position="30"/>
        <end position="59"/>
    </location>
</feature>
<feature type="region of interest" description="LID" evidence="1">
    <location>
        <begin position="123"/>
        <end position="170"/>
    </location>
</feature>
<feature type="binding site" evidence="2">
    <location>
        <begin position="10"/>
        <end position="15"/>
    </location>
    <ligand>
        <name>a ribonucleoside 5'-triphosphate</name>
        <dbReference type="ChEBI" id="CHEBI:61557"/>
    </ligand>
</feature>
<feature type="binding site" evidence="2">
    <location>
        <position position="36"/>
    </location>
    <ligand>
        <name>AMP</name>
        <dbReference type="ChEBI" id="CHEBI:456215"/>
    </ligand>
</feature>
<feature type="binding site" evidence="2">
    <location>
        <begin position="57"/>
        <end position="59"/>
    </location>
    <ligand>
        <name>AMP</name>
        <dbReference type="ChEBI" id="CHEBI:456215"/>
    </ligand>
</feature>
<feature type="binding site" evidence="2">
    <location>
        <begin position="87"/>
        <end position="90"/>
    </location>
    <ligand>
        <name>AMP</name>
        <dbReference type="ChEBI" id="CHEBI:456215"/>
    </ligand>
</feature>
<feature type="binding site" evidence="2">
    <location>
        <position position="87"/>
    </location>
    <ligand>
        <name>AMP</name>
        <dbReference type="ChEBI" id="CHEBI:456215"/>
    </ligand>
</feature>
<feature type="binding site" evidence="2">
    <location>
        <position position="94"/>
    </location>
    <ligand>
        <name>AMP</name>
        <dbReference type="ChEBI" id="CHEBI:456215"/>
    </ligand>
</feature>
<feature type="binding site" evidence="2">
    <location>
        <position position="178"/>
    </location>
    <ligand>
        <name>AMP</name>
        <dbReference type="ChEBI" id="CHEBI:456215"/>
    </ligand>
</feature>